<comment type="function">
    <text evidence="1 3">Protein modifier that is covalently attached to lysine residues of substrate proteins, thereby targeting them for proteasomal degradation. The tagging system is termed pupylation.</text>
</comment>
<comment type="pathway">
    <text evidence="1">Protein degradation; proteasomal Pup-dependent pathway.</text>
</comment>
<comment type="subunit">
    <text evidence="1 3 4">Strongly interacts with the proteasome-associated ATPase ARC through a hydrophobic interface; the interacting region of Pup lies in its C-terminal half. There is one Pup binding site per ARC hexamer ring (By similarity). Interacts with the Pup--protein ligase PafA and with the depupylase Dop via its C-terminal half.</text>
</comment>
<comment type="domain">
    <text evidence="1 3">The N-terminal unstructured half of Pup provides a signal required to initiate unfolding and degradation by the proteasome but is not needed for pupylation, while the C-terminal helical half of Pup interacts with ARC to target proteins to the proteasome (By similarity). The C-terminal 26 residues of PuP also interact with PafA and Dop.</text>
</comment>
<comment type="similarity">
    <text evidence="1">Belongs to the prokaryotic ubiquitin-like protein family.</text>
</comment>
<dbReference type="EMBL" id="BA000036">
    <property type="protein sequence ID" value="BAB98888.1"/>
    <property type="molecule type" value="Genomic_DNA"/>
</dbReference>
<dbReference type="EMBL" id="BX927152">
    <property type="protein sequence ID" value="CAF21503.1"/>
    <property type="molecule type" value="Genomic_DNA"/>
</dbReference>
<dbReference type="RefSeq" id="NP_600711.1">
    <property type="nucleotide sequence ID" value="NC_003450.3"/>
</dbReference>
<dbReference type="RefSeq" id="WP_003856167.1">
    <property type="nucleotide sequence ID" value="NC_006958.1"/>
</dbReference>
<dbReference type="PDB" id="4BJR">
    <property type="method" value="X-ray"/>
    <property type="resolution" value="2.80 A"/>
    <property type="chains" value="A/B=38-64"/>
</dbReference>
<dbReference type="PDBsum" id="4BJR"/>
<dbReference type="SMR" id="Q8NQE0"/>
<dbReference type="STRING" id="196627.cg1689"/>
<dbReference type="KEGG" id="cgb:cg1689"/>
<dbReference type="KEGG" id="cgl:Cgl1495"/>
<dbReference type="PATRIC" id="fig|196627.13.peg.1462"/>
<dbReference type="eggNOG" id="ENOG5033BS6">
    <property type="taxonomic scope" value="Bacteria"/>
</dbReference>
<dbReference type="HOGENOM" id="CLU_183816_1_0_11"/>
<dbReference type="OrthoDB" id="3254977at2"/>
<dbReference type="BioCyc" id="CORYNE:G18NG-11078-MONOMER"/>
<dbReference type="BRENDA" id="6.3.1.19">
    <property type="organism ID" value="960"/>
</dbReference>
<dbReference type="UniPathway" id="UPA00997"/>
<dbReference type="EvolutionaryTrace" id="Q8NQE0"/>
<dbReference type="Proteomes" id="UP000000582">
    <property type="component" value="Chromosome"/>
</dbReference>
<dbReference type="Proteomes" id="UP000001009">
    <property type="component" value="Chromosome"/>
</dbReference>
<dbReference type="GO" id="GO:0070628">
    <property type="term" value="F:proteasome binding"/>
    <property type="evidence" value="ECO:0007669"/>
    <property type="project" value="UniProtKB-UniRule"/>
</dbReference>
<dbReference type="GO" id="GO:0031386">
    <property type="term" value="F:protein tag activity"/>
    <property type="evidence" value="ECO:0007669"/>
    <property type="project" value="UniProtKB-UniRule"/>
</dbReference>
<dbReference type="GO" id="GO:0019941">
    <property type="term" value="P:modification-dependent protein catabolic process"/>
    <property type="evidence" value="ECO:0007669"/>
    <property type="project" value="UniProtKB-UniRule"/>
</dbReference>
<dbReference type="GO" id="GO:0010498">
    <property type="term" value="P:proteasomal protein catabolic process"/>
    <property type="evidence" value="ECO:0007669"/>
    <property type="project" value="UniProtKB-UniRule"/>
</dbReference>
<dbReference type="GO" id="GO:0070490">
    <property type="term" value="P:protein pupylation"/>
    <property type="evidence" value="ECO:0007669"/>
    <property type="project" value="UniProtKB-UniRule"/>
</dbReference>
<dbReference type="HAMAP" id="MF_02106">
    <property type="entry name" value="Pup"/>
    <property type="match status" value="1"/>
</dbReference>
<dbReference type="InterPro" id="IPR008515">
    <property type="entry name" value="Ubiquitin-like_Pup"/>
</dbReference>
<dbReference type="NCBIfam" id="TIGR03687">
    <property type="entry name" value="pupylate_cterm"/>
    <property type="match status" value="1"/>
</dbReference>
<dbReference type="Pfam" id="PF05639">
    <property type="entry name" value="Pup"/>
    <property type="match status" value="1"/>
</dbReference>
<organism>
    <name type="scientific">Corynebacterium glutamicum (strain ATCC 13032 / DSM 20300 / JCM 1318 / BCRC 11384 / CCUG 27702 / LMG 3730 / NBRC 12168 / NCIMB 10025 / NRRL B-2784 / 534)</name>
    <dbReference type="NCBI Taxonomy" id="196627"/>
    <lineage>
        <taxon>Bacteria</taxon>
        <taxon>Bacillati</taxon>
        <taxon>Actinomycetota</taxon>
        <taxon>Actinomycetes</taxon>
        <taxon>Mycobacteriales</taxon>
        <taxon>Corynebacteriaceae</taxon>
        <taxon>Corynebacterium</taxon>
    </lineage>
</organism>
<protein>
    <recommendedName>
        <fullName evidence="1">Prokaryotic ubiquitin-like protein Pup</fullName>
    </recommendedName>
    <alternativeName>
        <fullName evidence="1">Bacterial ubiquitin-like modifier</fullName>
    </alternativeName>
</protein>
<gene>
    <name evidence="1" type="primary">pup</name>
    <name type="ordered locus">Cgl1495</name>
    <name type="ordered locus">cg1689</name>
</gene>
<sequence>MNAKQTQIMGGGGRDEDNAEDSAQASGQVQINTEGVDSLLDEIDGLLENNAEEFVRSYVQKGGE</sequence>
<reference key="1">
    <citation type="journal article" date="2003" name="Appl. Microbiol. Biotechnol.">
        <title>The Corynebacterium glutamicum genome: features and impacts on biotechnological processes.</title>
        <authorList>
            <person name="Ikeda M."/>
            <person name="Nakagawa S."/>
        </authorList>
    </citation>
    <scope>NUCLEOTIDE SEQUENCE [LARGE SCALE GENOMIC DNA]</scope>
    <source>
        <strain>ATCC 13032 / DSM 20300 / JCM 1318 / BCRC 11384 / CCUG 27702 / LMG 3730 / NBRC 12168 / NCIMB 10025 / NRRL B-2784 / 534</strain>
    </source>
</reference>
<reference key="2">
    <citation type="journal article" date="2003" name="J. Biotechnol.">
        <title>The complete Corynebacterium glutamicum ATCC 13032 genome sequence and its impact on the production of L-aspartate-derived amino acids and vitamins.</title>
        <authorList>
            <person name="Kalinowski J."/>
            <person name="Bathe B."/>
            <person name="Bartels D."/>
            <person name="Bischoff N."/>
            <person name="Bott M."/>
            <person name="Burkovski A."/>
            <person name="Dusch N."/>
            <person name="Eggeling L."/>
            <person name="Eikmanns B.J."/>
            <person name="Gaigalat L."/>
            <person name="Goesmann A."/>
            <person name="Hartmann M."/>
            <person name="Huthmacher K."/>
            <person name="Kraemer R."/>
            <person name="Linke B."/>
            <person name="McHardy A.C."/>
            <person name="Meyer F."/>
            <person name="Moeckel B."/>
            <person name="Pfefferle W."/>
            <person name="Puehler A."/>
            <person name="Rey D.A."/>
            <person name="Rueckert C."/>
            <person name="Rupp O."/>
            <person name="Sahm H."/>
            <person name="Wendisch V.F."/>
            <person name="Wiegraebe I."/>
            <person name="Tauch A."/>
        </authorList>
    </citation>
    <scope>NUCLEOTIDE SEQUENCE [LARGE SCALE GENOMIC DNA]</scope>
    <source>
        <strain>ATCC 13032 / DSM 20300 / JCM 1318 / BCRC 11384 / CCUG 27702 / LMG 3730 / NBRC 12168 / NCIMB 10025 / NRRL B-2784 / 534</strain>
    </source>
</reference>
<reference key="3">
    <citation type="journal article" date="2012" name="Nat. Commun.">
        <title>Structures of Pup ligase PafA and depupylase Dop from the prokaryotic ubiquitin-like modification pathway.</title>
        <authorList>
            <person name="Ozcelik D."/>
            <person name="Barandun J."/>
            <person name="Schmitz N."/>
            <person name="Sutter M."/>
            <person name="Guth E."/>
            <person name="Damberger F.F."/>
            <person name="Allain F.H."/>
            <person name="Ban N."/>
            <person name="Weber-Ban E."/>
        </authorList>
    </citation>
    <scope>FUNCTION</scope>
    <scope>INTERACTION WITH PAFA AND DOP</scope>
    <scope>DOMAIN</scope>
    <source>
        <strain>ATCC 13032 / DSM 20300 / JCM 1318 / BCRC 11384 / CCUG 27702 / LMG 3730 / NBRC 12168 / NCIMB 10025 / NRRL B-2784 / 534</strain>
    </source>
</reference>
<reference key="4">
    <citation type="journal article" date="2013" name="J. Am. Chem. Soc.">
        <title>Crystal structure of the complex between prokaryotic ubiquitin-like protein and its ligase PafA.</title>
        <authorList>
            <person name="Barandun J."/>
            <person name="Delley C.L."/>
            <person name="Ban N."/>
            <person name="Weber-Ban E."/>
        </authorList>
    </citation>
    <scope>X-RAY CRYSTALLOGRAPHY (2.8 ANGSTROMS) OF 38-64 IN COMPLEX WITH PROTEIN PAFA</scope>
    <scope>INTERACTION WITH PAFA</scope>
    <source>
        <strain>ATCC 13032 / DSM 20300 / JCM 1318 / BCRC 11384 / CCUG 27702 / LMG 3730 / NBRC 12168 / NCIMB 10025 / NRRL B-2784 / 534</strain>
    </source>
</reference>
<accession>Q8NQE0</accession>
<accession>Q6M589</accession>
<feature type="chain" id="PRO_0000390576" description="Prokaryotic ubiquitin-like protein Pup">
    <location>
        <begin position="1"/>
        <end position="64"/>
    </location>
</feature>
<feature type="region of interest" description="Disordered" evidence="2">
    <location>
        <begin position="1"/>
        <end position="32"/>
    </location>
</feature>
<feature type="region of interest" description="ARC ATPase binding" evidence="1">
    <location>
        <begin position="20"/>
        <end position="58"/>
    </location>
</feature>
<feature type="compositionally biased region" description="Polar residues" evidence="2">
    <location>
        <begin position="21"/>
        <end position="32"/>
    </location>
</feature>
<feature type="cross-link" description="Isoglutamyl lysine isopeptide (Glu-Lys) (interchain with K-? in acceptor proteins)" evidence="1">
    <location>
        <position position="64"/>
    </location>
</feature>
<feature type="helix" evidence="5">
    <location>
        <begin position="38"/>
        <end position="46"/>
    </location>
</feature>
<feature type="helix" evidence="5">
    <location>
        <begin position="51"/>
        <end position="57"/>
    </location>
</feature>
<keyword id="KW-0002">3D-structure</keyword>
<keyword id="KW-1017">Isopeptide bond</keyword>
<keyword id="KW-1185">Reference proteome</keyword>
<keyword id="KW-0833">Ubl conjugation pathway</keyword>
<proteinExistence type="evidence at protein level"/>
<evidence type="ECO:0000255" key="1">
    <source>
        <dbReference type="HAMAP-Rule" id="MF_02106"/>
    </source>
</evidence>
<evidence type="ECO:0000256" key="2">
    <source>
        <dbReference type="SAM" id="MobiDB-lite"/>
    </source>
</evidence>
<evidence type="ECO:0000269" key="3">
    <source>
    </source>
</evidence>
<evidence type="ECO:0000269" key="4">
    <source>
    </source>
</evidence>
<evidence type="ECO:0007829" key="5">
    <source>
        <dbReference type="PDB" id="4BJR"/>
    </source>
</evidence>
<name>PUP_CORGL</name>